<name>LUXU_VIBHA</name>
<comment type="function">
    <text evidence="3">Phosphorelay protein which receives sensory signals from LuxN and LuxP and transmits them to LuxO, at low cell density. LuxN and LuxP transfer a phosphoryl group to LuxU on His-58 and this phosphoryl group is further transferred to LuxO. At high cell density, as LuxU could function to establish an equilibrium between the aspartyl-phosphate of LuxN and the aspartyl-phosphate of LuxO, LuxU transfers phosphate from LuxO to LuxN (and probably LuxP) and finally phosphate is drained from the system.</text>
</comment>
<comment type="subunit">
    <text evidence="2">Monomer.</text>
</comment>
<proteinExistence type="evidence at protein level"/>
<keyword id="KW-0002">3D-structure</keyword>
<keyword id="KW-0597">Phosphoprotein</keyword>
<keyword id="KW-0902">Two-component regulatory system</keyword>
<feature type="chain" id="PRO_0000220141" description="Phosphorelay protein LuxU">
    <location>
        <begin position="1"/>
        <end position="114"/>
    </location>
</feature>
<feature type="domain" description="HPt" evidence="1">
    <location>
        <begin position="19"/>
        <end position="114"/>
    </location>
</feature>
<feature type="modified residue" description="Phosphohistidine" evidence="1 3">
    <location>
        <position position="58"/>
    </location>
</feature>
<feature type="mutagenesis site" description="Constitutive luminescence." evidence="3">
    <original>H</original>
    <variation>A</variation>
    <location>
        <position position="58"/>
    </location>
</feature>
<feature type="mutagenesis site" description="No effect." evidence="3">
    <original>H</original>
    <variation>A</variation>
    <location>
        <position position="103"/>
    </location>
</feature>
<feature type="turn" evidence="4">
    <location>
        <begin position="4"/>
        <end position="9"/>
    </location>
</feature>
<feature type="helix" evidence="4">
    <location>
        <begin position="10"/>
        <end position="14"/>
    </location>
</feature>
<feature type="helix" evidence="4">
    <location>
        <begin position="16"/>
        <end position="40"/>
    </location>
</feature>
<feature type="turn" evidence="4">
    <location>
        <begin position="41"/>
        <end position="44"/>
    </location>
</feature>
<feature type="helix" evidence="4">
    <location>
        <begin position="47"/>
        <end position="57"/>
    </location>
</feature>
<feature type="helix" evidence="4">
    <location>
        <begin position="59"/>
        <end position="67"/>
    </location>
</feature>
<feature type="turn" evidence="4">
    <location>
        <begin position="68"/>
        <end position="70"/>
    </location>
</feature>
<feature type="helix" evidence="4">
    <location>
        <begin position="71"/>
        <end position="82"/>
    </location>
</feature>
<feature type="helix" evidence="4">
    <location>
        <begin position="84"/>
        <end position="88"/>
    </location>
</feature>
<feature type="turn" evidence="4">
    <location>
        <begin position="90"/>
        <end position="92"/>
    </location>
</feature>
<feature type="turn" evidence="4">
    <location>
        <begin position="94"/>
        <end position="99"/>
    </location>
</feature>
<feature type="helix" evidence="4">
    <location>
        <begin position="100"/>
        <end position="112"/>
    </location>
</feature>
<evidence type="ECO:0000255" key="1">
    <source>
        <dbReference type="PROSITE-ProRule" id="PRU00110"/>
    </source>
</evidence>
<evidence type="ECO:0000269" key="2">
    <source>
    </source>
</evidence>
<evidence type="ECO:0000269" key="3">
    <source>
    </source>
</evidence>
<evidence type="ECO:0007829" key="4">
    <source>
        <dbReference type="PDB" id="1Y6D"/>
    </source>
</evidence>
<gene>
    <name type="primary">luxU</name>
</gene>
<sequence>MNTDVLNQQKIEELSAEIGSDNVPVLLDIFLGEMDSYIGTLTELQGSEQLLYLKEISHALKSSAASFGADRLCERAIAIDKKAKANQLQEQGMETSEMLALLHITRDAYRSWTN</sequence>
<protein>
    <recommendedName>
        <fullName>Phosphorelay protein LuxU</fullName>
    </recommendedName>
</protein>
<accession>P0C5S4</accession>
<accession>Q9ZBB6</accession>
<reference key="1">
    <citation type="journal article" date="1999" name="J. Bacteriol.">
        <title>Sequence and function of LuxU: a two-component phosphorelay protein that regulates quorum sensing in Vibrio harveyi.</title>
        <authorList>
            <person name="Freeman J.A."/>
            <person name="Bassler B.L."/>
        </authorList>
    </citation>
    <scope>NUCLEOTIDE SEQUENCE [GENOMIC DNA]</scope>
    <scope>FUNCTION</scope>
    <scope>PHOSPHORYLATION AT HIS-58</scope>
    <scope>MUTAGENESIS OF HIS-58 AND HIS-103</scope>
    <source>
        <strain>BB7</strain>
    </source>
</reference>
<reference key="2">
    <citation type="journal article" date="2005" name="J. Mol. Biol.">
        <title>Solution structure and dynamics of LuxU from Vibrio harveyi, a phosphotransferase protein involved in bacterial quorum sensing.</title>
        <authorList>
            <person name="Ulrich D.L."/>
            <person name="Kojetin D."/>
            <person name="Bassler B.L."/>
            <person name="Cavanagh J."/>
            <person name="Loria J.P."/>
        </authorList>
    </citation>
    <scope>STRUCTURE BY NMR</scope>
    <scope>SUBUNIT</scope>
</reference>
<organism>
    <name type="scientific">Vibrio harveyi</name>
    <name type="common">Beneckea harveyi</name>
    <dbReference type="NCBI Taxonomy" id="669"/>
    <lineage>
        <taxon>Bacteria</taxon>
        <taxon>Pseudomonadati</taxon>
        <taxon>Pseudomonadota</taxon>
        <taxon>Gammaproteobacteria</taxon>
        <taxon>Vibrionales</taxon>
        <taxon>Vibrionaceae</taxon>
        <taxon>Vibrio</taxon>
    </lineage>
</organism>
<dbReference type="EMBL" id="L26221">
    <property type="protein sequence ID" value="AAD12737.2"/>
    <property type="molecule type" value="Genomic_DNA"/>
</dbReference>
<dbReference type="PDB" id="1Y6D">
    <property type="method" value="NMR"/>
    <property type="chains" value="A=1-114"/>
</dbReference>
<dbReference type="PDBsum" id="1Y6D"/>
<dbReference type="BMRB" id="P0C5S4"/>
<dbReference type="SMR" id="P0C5S4"/>
<dbReference type="STRING" id="669.AL538_04120"/>
<dbReference type="iPTMnet" id="P0C5S4"/>
<dbReference type="EvolutionaryTrace" id="P0C5S4"/>
<dbReference type="GO" id="GO:0004672">
    <property type="term" value="F:protein kinase activity"/>
    <property type="evidence" value="ECO:0007669"/>
    <property type="project" value="UniProtKB-ARBA"/>
</dbReference>
<dbReference type="GO" id="GO:0000160">
    <property type="term" value="P:phosphorelay signal transduction system"/>
    <property type="evidence" value="ECO:0007669"/>
    <property type="project" value="UniProtKB-KW"/>
</dbReference>
<dbReference type="DisProt" id="DP00292"/>
<dbReference type="Gene3D" id="1.20.120.160">
    <property type="entry name" value="HPT domain"/>
    <property type="match status" value="1"/>
</dbReference>
<dbReference type="InterPro" id="IPR036641">
    <property type="entry name" value="HPT_dom_sf"/>
</dbReference>
<dbReference type="InterPro" id="IPR053403">
    <property type="entry name" value="QS_phosphorelay_intermediate"/>
</dbReference>
<dbReference type="InterPro" id="IPR008207">
    <property type="entry name" value="Sig_transdc_His_kin_Hpt_dom"/>
</dbReference>
<dbReference type="NCBIfam" id="NF041948">
    <property type="entry name" value="Phrelay_LuxU_Vib"/>
    <property type="match status" value="1"/>
</dbReference>
<dbReference type="Pfam" id="PF01627">
    <property type="entry name" value="Hpt"/>
    <property type="match status" value="1"/>
</dbReference>
<dbReference type="SUPFAM" id="SSF47226">
    <property type="entry name" value="Histidine-containing phosphotransfer domain, HPT domain"/>
    <property type="match status" value="1"/>
</dbReference>
<dbReference type="PROSITE" id="PS50894">
    <property type="entry name" value="HPT"/>
    <property type="match status" value="1"/>
</dbReference>